<gene>
    <name evidence="1" type="primary">trhO</name>
    <name type="ordered locus">sll0765</name>
</gene>
<feature type="chain" id="PRO_0000161533" description="tRNA uridine(34) hydroxylase">
    <location>
        <begin position="1"/>
        <end position="278"/>
    </location>
</feature>
<feature type="domain" description="Rhodanese" evidence="1">
    <location>
        <begin position="122"/>
        <end position="216"/>
    </location>
</feature>
<feature type="active site" description="Cysteine persulfide intermediate" evidence="1">
    <location>
        <position position="176"/>
    </location>
</feature>
<proteinExistence type="inferred from homology"/>
<accession>Q55613</accession>
<organism>
    <name type="scientific">Synechocystis sp. (strain ATCC 27184 / PCC 6803 / Kazusa)</name>
    <dbReference type="NCBI Taxonomy" id="1111708"/>
    <lineage>
        <taxon>Bacteria</taxon>
        <taxon>Bacillati</taxon>
        <taxon>Cyanobacteriota</taxon>
        <taxon>Cyanophyceae</taxon>
        <taxon>Synechococcales</taxon>
        <taxon>Merismopediaceae</taxon>
        <taxon>Synechocystis</taxon>
    </lineage>
</organism>
<keyword id="KW-0560">Oxidoreductase</keyword>
<keyword id="KW-1185">Reference proteome</keyword>
<keyword id="KW-0819">tRNA processing</keyword>
<evidence type="ECO:0000255" key="1">
    <source>
        <dbReference type="HAMAP-Rule" id="MF_00469"/>
    </source>
</evidence>
<dbReference type="EC" id="1.14.-.-" evidence="1"/>
<dbReference type="EMBL" id="BA000022">
    <property type="protein sequence ID" value="BAA10124.1"/>
    <property type="molecule type" value="Genomic_DNA"/>
</dbReference>
<dbReference type="PIR" id="S76272">
    <property type="entry name" value="S76272"/>
</dbReference>
<dbReference type="SMR" id="Q55613"/>
<dbReference type="FunCoup" id="Q55613">
    <property type="interactions" value="278"/>
</dbReference>
<dbReference type="STRING" id="1148.gene:10499616"/>
<dbReference type="PaxDb" id="1148-1001499"/>
<dbReference type="EnsemblBacteria" id="BAA10124">
    <property type="protein sequence ID" value="BAA10124"/>
    <property type="gene ID" value="BAA10124"/>
</dbReference>
<dbReference type="KEGG" id="syn:sll0765"/>
<dbReference type="eggNOG" id="COG1054">
    <property type="taxonomic scope" value="Bacteria"/>
</dbReference>
<dbReference type="InParanoid" id="Q55613"/>
<dbReference type="PhylomeDB" id="Q55613"/>
<dbReference type="Proteomes" id="UP000001425">
    <property type="component" value="Chromosome"/>
</dbReference>
<dbReference type="GO" id="GO:0016705">
    <property type="term" value="F:oxidoreductase activity, acting on paired donors, with incorporation or reduction of molecular oxygen"/>
    <property type="evidence" value="ECO:0007669"/>
    <property type="project" value="UniProtKB-UniRule"/>
</dbReference>
<dbReference type="GO" id="GO:0006400">
    <property type="term" value="P:tRNA modification"/>
    <property type="evidence" value="ECO:0007669"/>
    <property type="project" value="UniProtKB-UniRule"/>
</dbReference>
<dbReference type="CDD" id="cd01518">
    <property type="entry name" value="RHOD_YceA"/>
    <property type="match status" value="1"/>
</dbReference>
<dbReference type="Gene3D" id="3.30.70.100">
    <property type="match status" value="1"/>
</dbReference>
<dbReference type="Gene3D" id="3.40.250.10">
    <property type="entry name" value="Rhodanese-like domain"/>
    <property type="match status" value="1"/>
</dbReference>
<dbReference type="HAMAP" id="MF_00469">
    <property type="entry name" value="TrhO"/>
    <property type="match status" value="1"/>
</dbReference>
<dbReference type="InterPro" id="IPR001763">
    <property type="entry name" value="Rhodanese-like_dom"/>
</dbReference>
<dbReference type="InterPro" id="IPR036873">
    <property type="entry name" value="Rhodanese-like_dom_sf"/>
</dbReference>
<dbReference type="InterPro" id="IPR020936">
    <property type="entry name" value="TrhO"/>
</dbReference>
<dbReference type="InterPro" id="IPR040503">
    <property type="entry name" value="TRHO_N"/>
</dbReference>
<dbReference type="NCBIfam" id="NF001136">
    <property type="entry name" value="PRK00142.1-4"/>
    <property type="match status" value="1"/>
</dbReference>
<dbReference type="PANTHER" id="PTHR43268:SF3">
    <property type="entry name" value="RHODANESE-LIKE DOMAIN-CONTAINING PROTEIN 7-RELATED"/>
    <property type="match status" value="1"/>
</dbReference>
<dbReference type="PANTHER" id="PTHR43268">
    <property type="entry name" value="THIOSULFATE SULFURTRANSFERASE/RHODANESE-LIKE DOMAIN-CONTAINING PROTEIN 2"/>
    <property type="match status" value="1"/>
</dbReference>
<dbReference type="Pfam" id="PF00581">
    <property type="entry name" value="Rhodanese"/>
    <property type="match status" value="1"/>
</dbReference>
<dbReference type="Pfam" id="PF17773">
    <property type="entry name" value="UPF0176_N"/>
    <property type="match status" value="1"/>
</dbReference>
<dbReference type="SMART" id="SM00450">
    <property type="entry name" value="RHOD"/>
    <property type="match status" value="1"/>
</dbReference>
<dbReference type="SUPFAM" id="SSF52821">
    <property type="entry name" value="Rhodanese/Cell cycle control phosphatase"/>
    <property type="match status" value="1"/>
</dbReference>
<dbReference type="PROSITE" id="PS50206">
    <property type="entry name" value="RHODANESE_3"/>
    <property type="match status" value="1"/>
</dbReference>
<protein>
    <recommendedName>
        <fullName evidence="1">tRNA uridine(34) hydroxylase</fullName>
        <ecNumber evidence="1">1.14.-.-</ecNumber>
    </recommendedName>
    <alternativeName>
        <fullName evidence="1">tRNA hydroxylation protein O</fullName>
    </alternativeName>
</protein>
<comment type="function">
    <text evidence="1">Catalyzes oxygen-dependent 5-hydroxyuridine (ho5U) modification at position 34 in tRNAs.</text>
</comment>
<comment type="catalytic activity">
    <reaction evidence="1">
        <text>uridine(34) in tRNA + AH2 + O2 = 5-hydroxyuridine(34) in tRNA + A + H2O</text>
        <dbReference type="Rhea" id="RHEA:64224"/>
        <dbReference type="Rhea" id="RHEA-COMP:11727"/>
        <dbReference type="Rhea" id="RHEA-COMP:13381"/>
        <dbReference type="ChEBI" id="CHEBI:13193"/>
        <dbReference type="ChEBI" id="CHEBI:15377"/>
        <dbReference type="ChEBI" id="CHEBI:15379"/>
        <dbReference type="ChEBI" id="CHEBI:17499"/>
        <dbReference type="ChEBI" id="CHEBI:65315"/>
        <dbReference type="ChEBI" id="CHEBI:136877"/>
    </reaction>
</comment>
<comment type="similarity">
    <text evidence="1">Belongs to the TrhO family.</text>
</comment>
<name>TRHO_SYNY3</name>
<reference key="1">
    <citation type="journal article" date="1995" name="DNA Res.">
        <title>Sequence analysis of the genome of the unicellular cyanobacterium Synechocystis sp. strain PCC6803. I. Sequence features in the 1 Mb region from map positions 64% to 92% of the genome.</title>
        <authorList>
            <person name="Kaneko T."/>
            <person name="Tanaka A."/>
            <person name="Sato S."/>
            <person name="Kotani H."/>
            <person name="Sazuka T."/>
            <person name="Miyajima N."/>
            <person name="Sugiura M."/>
            <person name="Tabata S."/>
        </authorList>
    </citation>
    <scope>NUCLEOTIDE SEQUENCE [LARGE SCALE GENOMIC DNA]</scope>
    <source>
        <strain>ATCC 27184 / PCC 6803 / N-1</strain>
    </source>
</reference>
<reference key="2">
    <citation type="journal article" date="1996" name="DNA Res.">
        <title>Sequence analysis of the genome of the unicellular cyanobacterium Synechocystis sp. strain PCC6803. II. Sequence determination of the entire genome and assignment of potential protein-coding regions.</title>
        <authorList>
            <person name="Kaneko T."/>
            <person name="Sato S."/>
            <person name="Kotani H."/>
            <person name="Tanaka A."/>
            <person name="Asamizu E."/>
            <person name="Nakamura Y."/>
            <person name="Miyajima N."/>
            <person name="Hirosawa M."/>
            <person name="Sugiura M."/>
            <person name="Sasamoto S."/>
            <person name="Kimura T."/>
            <person name="Hosouchi T."/>
            <person name="Matsuno A."/>
            <person name="Muraki A."/>
            <person name="Nakazaki N."/>
            <person name="Naruo K."/>
            <person name="Okumura S."/>
            <person name="Shimpo S."/>
            <person name="Takeuchi C."/>
            <person name="Wada T."/>
            <person name="Watanabe A."/>
            <person name="Yamada M."/>
            <person name="Yasuda M."/>
            <person name="Tabata S."/>
        </authorList>
    </citation>
    <scope>NUCLEOTIDE SEQUENCE [LARGE SCALE GENOMIC DNA]</scope>
    <source>
        <strain>ATCC 27184 / PCC 6803 / Kazusa</strain>
    </source>
</reference>
<sequence>MAYQVTTFYHFTRLNCLAEKQSRWQELGDRLGLKGTILLAEEGVNATIAGESAAIEEMVKIMAADLGLTSVPQRHSWAKTIPFQRMKVKIKPEIVSLGQPQVNPEKQVGTYVSPQQWNQLLQDPDVVVIDTRNDYEVAIGTFQGAVNPCTKKFRQFPDYVKNNLDQQKNKKVAMFCTGGIRCEKASAYLLEEGFAEVYHLRGGILHYLETIAPEESLWQGECFVFDERVAVQEGLKVGSHALCDHCGYPLRVGDLAEIRYAVRHCPQCGLTVAVSNEL</sequence>